<dbReference type="EC" id="3.2.1.8"/>
<dbReference type="EMBL" id="AJ508403">
    <property type="protein sequence ID" value="CAD48307.1"/>
    <property type="molecule type" value="Genomic_DNA"/>
</dbReference>
<dbReference type="EMBL" id="AF417638">
    <property type="protein sequence ID" value="AAL14106.1"/>
    <property type="molecule type" value="Genomic_DNA"/>
</dbReference>
<dbReference type="PDB" id="1NAE">
    <property type="method" value="X-ray"/>
    <property type="resolution" value="2.05 A"/>
    <property type="chains" value="A=507-651"/>
</dbReference>
<dbReference type="PDB" id="1O8P">
    <property type="method" value="X-ray"/>
    <property type="resolution" value="2.00 A"/>
    <property type="chains" value="A=507-651"/>
</dbReference>
<dbReference type="PDB" id="1O8S">
    <property type="method" value="X-ray"/>
    <property type="resolution" value="1.15 A"/>
    <property type="chains" value="A=507-651"/>
</dbReference>
<dbReference type="PDB" id="1OD3">
    <property type="method" value="X-ray"/>
    <property type="resolution" value="1.00 A"/>
    <property type="chains" value="A=507-651"/>
</dbReference>
<dbReference type="PDB" id="1UY1">
    <property type="method" value="X-ray"/>
    <property type="resolution" value="1.80 A"/>
    <property type="chains" value="A=235-373"/>
</dbReference>
<dbReference type="PDB" id="1UY2">
    <property type="method" value="X-ray"/>
    <property type="resolution" value="1.70 A"/>
    <property type="chains" value="A=235-373"/>
</dbReference>
<dbReference type="PDB" id="1UY3">
    <property type="method" value="X-ray"/>
    <property type="resolution" value="1.89 A"/>
    <property type="chains" value="A=235-373"/>
</dbReference>
<dbReference type="PDB" id="1UY4">
    <property type="method" value="X-ray"/>
    <property type="resolution" value="1.69 A"/>
    <property type="chains" value="A=235-373"/>
</dbReference>
<dbReference type="PDBsum" id="1NAE"/>
<dbReference type="PDBsum" id="1O8P"/>
<dbReference type="PDBsum" id="1O8S"/>
<dbReference type="PDBsum" id="1OD3"/>
<dbReference type="PDBsum" id="1UY1"/>
<dbReference type="PDBsum" id="1UY2"/>
<dbReference type="PDBsum" id="1UY3"/>
<dbReference type="PDBsum" id="1UY4"/>
<dbReference type="SMR" id="Q8GJ44"/>
<dbReference type="DrugBank" id="DB03389">
    <property type="generic name" value="alpha-D-Xylopyranose"/>
</dbReference>
<dbReference type="DrugBank" id="DB02379">
    <property type="generic name" value="Beta-D-Glucose"/>
</dbReference>
<dbReference type="CAZy" id="CBM6">
    <property type="family name" value="Carbohydrate-Binding Module Family 6"/>
</dbReference>
<dbReference type="CAZy" id="GH11">
    <property type="family name" value="Glycoside Hydrolase Family 11"/>
</dbReference>
<dbReference type="BRENDA" id="3.2.1.8">
    <property type="organism ID" value="1520"/>
</dbReference>
<dbReference type="UniPathway" id="UPA00114"/>
<dbReference type="EvolutionaryTrace" id="Q8GJ44"/>
<dbReference type="GO" id="GO:0005576">
    <property type="term" value="C:extracellular region"/>
    <property type="evidence" value="ECO:0007669"/>
    <property type="project" value="UniProtKB-SubCell"/>
</dbReference>
<dbReference type="GO" id="GO:0030246">
    <property type="term" value="F:carbohydrate binding"/>
    <property type="evidence" value="ECO:0007669"/>
    <property type="project" value="InterPro"/>
</dbReference>
<dbReference type="GO" id="GO:0031176">
    <property type="term" value="F:endo-1,4-beta-xylanase activity"/>
    <property type="evidence" value="ECO:0007669"/>
    <property type="project" value="UniProtKB-EC"/>
</dbReference>
<dbReference type="GO" id="GO:0046872">
    <property type="term" value="F:metal ion binding"/>
    <property type="evidence" value="ECO:0007669"/>
    <property type="project" value="UniProtKB-KW"/>
</dbReference>
<dbReference type="GO" id="GO:0030245">
    <property type="term" value="P:cellulose catabolic process"/>
    <property type="evidence" value="ECO:0007669"/>
    <property type="project" value="UniProtKB-KW"/>
</dbReference>
<dbReference type="GO" id="GO:0045493">
    <property type="term" value="P:xylan catabolic process"/>
    <property type="evidence" value="ECO:0007669"/>
    <property type="project" value="UniProtKB-UniPathway"/>
</dbReference>
<dbReference type="CDD" id="cd04084">
    <property type="entry name" value="CBM6_xylanase-like"/>
    <property type="match status" value="3"/>
</dbReference>
<dbReference type="Gene3D" id="2.60.120.180">
    <property type="match status" value="1"/>
</dbReference>
<dbReference type="Gene3D" id="2.60.120.260">
    <property type="entry name" value="Galactose-binding domain-like"/>
    <property type="match status" value="3"/>
</dbReference>
<dbReference type="InterPro" id="IPR005084">
    <property type="entry name" value="CBM6"/>
</dbReference>
<dbReference type="InterPro" id="IPR006584">
    <property type="entry name" value="Cellulose-bd_IV"/>
</dbReference>
<dbReference type="InterPro" id="IPR013320">
    <property type="entry name" value="ConA-like_dom_sf"/>
</dbReference>
<dbReference type="InterPro" id="IPR008979">
    <property type="entry name" value="Galactose-bd-like_sf"/>
</dbReference>
<dbReference type="InterPro" id="IPR013319">
    <property type="entry name" value="GH11/12"/>
</dbReference>
<dbReference type="InterPro" id="IPR018208">
    <property type="entry name" value="GH11_AS_1"/>
</dbReference>
<dbReference type="InterPro" id="IPR033119">
    <property type="entry name" value="GH11_AS_2"/>
</dbReference>
<dbReference type="InterPro" id="IPR033123">
    <property type="entry name" value="GH11_dom"/>
</dbReference>
<dbReference type="InterPro" id="IPR001137">
    <property type="entry name" value="Glyco_hydro_11"/>
</dbReference>
<dbReference type="PANTHER" id="PTHR46828">
    <property type="entry name" value="ENDO-1,4-BETA-XYLANASE A-RELATED"/>
    <property type="match status" value="1"/>
</dbReference>
<dbReference type="PANTHER" id="PTHR46828:SF2">
    <property type="entry name" value="ENDO-1,4-BETA-XYLANASE A-RELATED"/>
    <property type="match status" value="1"/>
</dbReference>
<dbReference type="Pfam" id="PF03422">
    <property type="entry name" value="CBM_6"/>
    <property type="match status" value="3"/>
</dbReference>
<dbReference type="Pfam" id="PF00457">
    <property type="entry name" value="Glyco_hydro_11"/>
    <property type="match status" value="1"/>
</dbReference>
<dbReference type="PRINTS" id="PR00911">
    <property type="entry name" value="GLHYDRLASE11"/>
</dbReference>
<dbReference type="SMART" id="SM00606">
    <property type="entry name" value="CBD_IV"/>
    <property type="match status" value="3"/>
</dbReference>
<dbReference type="SUPFAM" id="SSF49899">
    <property type="entry name" value="Concanavalin A-like lectins/glucanases"/>
    <property type="match status" value="1"/>
</dbReference>
<dbReference type="SUPFAM" id="SSF49785">
    <property type="entry name" value="Galactose-binding domain-like"/>
    <property type="match status" value="3"/>
</dbReference>
<dbReference type="PROSITE" id="PS51175">
    <property type="entry name" value="CBM6"/>
    <property type="match status" value="3"/>
</dbReference>
<dbReference type="PROSITE" id="PS00776">
    <property type="entry name" value="GH11_1"/>
    <property type="match status" value="1"/>
</dbReference>
<dbReference type="PROSITE" id="PS00777">
    <property type="entry name" value="GH11_2"/>
    <property type="match status" value="1"/>
</dbReference>
<dbReference type="PROSITE" id="PS51761">
    <property type="entry name" value="GH11_3"/>
    <property type="match status" value="1"/>
</dbReference>
<accession>Q8GJ44</accession>
<accession>Q93AQ5</accession>
<comment type="function">
    <text evidence="6 9">Endoxylanase that degrades arabinoxylan and glucuronoxylan to xylobiose and xylotriose (in vitro).</text>
</comment>
<comment type="catalytic activity">
    <reaction>
        <text>Endohydrolysis of (1-&gt;4)-beta-D-xylosidic linkages in xylans.</text>
        <dbReference type="EC" id="3.2.1.8"/>
    </reaction>
</comment>
<comment type="biophysicochemical properties">
    <phDependence>
        <text evidence="9">Optimum pH is 6.5-7.0.</text>
    </phDependence>
    <temperatureDependence>
        <text evidence="9">Optimum temperature is 75 degrees Celsius. Thermostable.</text>
    </temperatureDependence>
</comment>
<comment type="pathway">
    <text>Glycan degradation; xylan degradation.</text>
</comment>
<comment type="subcellular location">
    <subcellularLocation>
        <location evidence="9">Secreted</location>
    </subcellularLocation>
</comment>
<comment type="induction">
    <text evidence="9">Up-regulated by growth on xylan.</text>
</comment>
<comment type="domain">
    <text>XynA is a modular enzyme. The number of CBM6 (carbohydrate binding type-6) domains varies between strains. The polymeric substrate can interact with several of these CBM6 domains.</text>
</comment>
<comment type="similarity">
    <text evidence="10">Belongs to the glycosyl hydrolase 11 (cellulase G) family.</text>
</comment>
<sequence length="651" mass="70151">MKRKVKKMAAMATSIIMAIMIILHSIPVLAGRIIYDNETGTHGGYDYELWKDYGNTIMELNDGGTFSCQWSNIGNALFRKGRKFNSDKTYQELGDIVVEYGCDYNPNGNSYLCVYGWTRNPLVEYYIVESWGSWRPPGATPKGTITVDGGTYEIYETTRVNQPSIDGTATFQQYWSVRTSKRTSGTISVTEHFKQWERMGMRMGKMYEVALTVEGYQSSGYANVYKNEIRIGANPTPAPSQSPIRRDAFSIIEAEEYNSTNSSTLQVIGTPNNGRGIGYIENGNTVTYSNIDFGSGATGFSATVATEVNTSIQIRSDSPTGTLLGTLYVSSTGSWNTYQTVSTNISKITGVHDIVLVFSGPVNVDNFIFSRSSPVPAPGDNTRDAYSIIQAEDYDSSYGPNLQIFSLPGGGSAIGYIENGYSTTYNNVNFANGLSSITARVATQISTSIQVRAGGATGTLLGTIYVPSTNSWDSYQNVTANLSNITGVHDITLVFSGPVNVDYFVFTPANVNSGPTSPVGGTRSAFSNIQAEDYDSSYGPNLQIFSLPGGGSAIGYIENGYSTTYKNIDFGDGATSVTARVATQNATTIQVRLGSPSGTLLGTIYVGSTGSFDTYRDVSATISNTAGVKDIVLVFSGPVNVDWFVFSKSGT</sequence>
<reference key="1">
    <citation type="journal article" date="2004" name="Microbiology">
        <title>Enzyme system of Clostridium stercorarium for hydrolysis of arabinoxylan: reconstitution of the in vivo system from recombinant enzymes.</title>
        <authorList>
            <person name="Adelsberger H."/>
            <person name="Hertel C."/>
            <person name="Glawischnig E."/>
            <person name="Zverlov V.V."/>
            <person name="Schwarz W.H."/>
        </authorList>
    </citation>
    <scope>NUCLEOTIDE SEQUENCE [GENOMIC DNA]</scope>
    <scope>FUNCTION</scope>
    <scope>INDUCTION</scope>
    <scope>SUBCELLULAR LOCATION</scope>
    <scope>BIOPHYSICOCHEMICAL PROPERTIES</scope>
    <source>
        <strain>NCIB 11745</strain>
    </source>
</reference>
<reference key="2">
    <citation type="journal article" date="2002" name="Mol. Microbiol.">
        <title>Co-operative binding of triplicate carbohydrate-binding modules from a thermophilic xylanase.</title>
        <authorList>
            <person name="Boraston A.B."/>
            <person name="McLean B.W."/>
            <person name="Chen G."/>
            <person name="Li A."/>
            <person name="Warren R.A.J."/>
            <person name="Kilburn D.G."/>
        </authorList>
    </citation>
    <scope>NUCLEOTIDE SEQUENCE [GENOMIC DNA] OF 235-651</scope>
    <scope>FUNCTION</scope>
    <source>
        <strain>NCIB 11745</strain>
    </source>
</reference>
<reference evidence="11 12 13 14" key="3">
    <citation type="journal article" date="2003" name="J. Mol. Biol.">
        <title>Structure and ligand binding of carbohydrate-binding module CsCBM6-3 reveals similarities with fucose-specific lectins and 'galactose-binding' domains.</title>
        <authorList>
            <person name="Boraston A.B."/>
            <person name="Notenboom V."/>
            <person name="Warren R.A.J."/>
            <person name="Kilburn D.G."/>
            <person name="Rose D.R."/>
            <person name="Davies G."/>
        </authorList>
    </citation>
    <scope>X-RAY CRYSTALLOGRAPHY (1.0 ANGSTROMS) OF 507-651 IN COMPLEXES WITH D-XYLOTRIOSE; CELLOBIOSE; LAMINARIBIOSE AND CALCIUM IONS</scope>
</reference>
<reference evidence="15 16 17 18" key="4">
    <citation type="journal article" date="2004" name="J. Mol. Biol.">
        <title>Binding sub-site dissection of a carbohydrate-binding module reveals the contribution of entropy to oligosaccharide recognition at 'non-primary' binding subsites.</title>
        <authorList>
            <person name="Lammerts van Bueren A."/>
            <person name="Boraston A.B."/>
        </authorList>
    </citation>
    <scope>X-RAY CRYSTALLOGRAPHY (1.69 ANGSTROMS) OF 235-373 IN COMPLEX WITH D-XYLOBIOSE; D-XYLOTRIOSE; D-XYLOTETRAOSE AND CALCIUM IONS</scope>
</reference>
<gene>
    <name type="primary">xynA</name>
</gene>
<proteinExistence type="evidence at protein level"/>
<protein>
    <recommendedName>
        <fullName>Endo-1,4-beta-xylanase A</fullName>
        <ecNumber>3.2.1.8</ecNumber>
    </recommendedName>
    <alternativeName>
        <fullName>1,4-beta-D-xylan xylanohydrolase A</fullName>
    </alternativeName>
    <alternativeName>
        <fullName>Xylanase 11A</fullName>
        <shortName>Xyn11A</shortName>
    </alternativeName>
</protein>
<name>XYNA1_THEST</name>
<evidence type="ECO:0000255" key="1"/>
<evidence type="ECO:0000255" key="2">
    <source>
        <dbReference type="PROSITE-ProRule" id="PRU00523"/>
    </source>
</evidence>
<evidence type="ECO:0000255" key="3">
    <source>
        <dbReference type="PROSITE-ProRule" id="PRU01097"/>
    </source>
</evidence>
<evidence type="ECO:0000255" key="4">
    <source>
        <dbReference type="PROSITE-ProRule" id="PRU10062"/>
    </source>
</evidence>
<evidence type="ECO:0000255" key="5">
    <source>
        <dbReference type="PROSITE-ProRule" id="PRU10063"/>
    </source>
</evidence>
<evidence type="ECO:0000269" key="6">
    <source>
    </source>
</evidence>
<evidence type="ECO:0000269" key="7">
    <source>
    </source>
</evidence>
<evidence type="ECO:0000269" key="8">
    <source>
    </source>
</evidence>
<evidence type="ECO:0000269" key="9">
    <source>
    </source>
</evidence>
<evidence type="ECO:0000305" key="10"/>
<evidence type="ECO:0007744" key="11">
    <source>
        <dbReference type="PDB" id="1NAE"/>
    </source>
</evidence>
<evidence type="ECO:0007744" key="12">
    <source>
        <dbReference type="PDB" id="1O8P"/>
    </source>
</evidence>
<evidence type="ECO:0007744" key="13">
    <source>
        <dbReference type="PDB" id="1O8S"/>
    </source>
</evidence>
<evidence type="ECO:0007744" key="14">
    <source>
        <dbReference type="PDB" id="1OD3"/>
    </source>
</evidence>
<evidence type="ECO:0007744" key="15">
    <source>
        <dbReference type="PDB" id="1UY1"/>
    </source>
</evidence>
<evidence type="ECO:0007744" key="16">
    <source>
        <dbReference type="PDB" id="1UY2"/>
    </source>
</evidence>
<evidence type="ECO:0007744" key="17">
    <source>
        <dbReference type="PDB" id="1UY3"/>
    </source>
</evidence>
<evidence type="ECO:0007744" key="18">
    <source>
        <dbReference type="PDB" id="1UY4"/>
    </source>
</evidence>
<evidence type="ECO:0007829" key="19">
    <source>
        <dbReference type="PDB" id="1O8P"/>
    </source>
</evidence>
<evidence type="ECO:0007829" key="20">
    <source>
        <dbReference type="PDB" id="1OD3"/>
    </source>
</evidence>
<evidence type="ECO:0007829" key="21">
    <source>
        <dbReference type="PDB" id="1UY4"/>
    </source>
</evidence>
<feature type="signal peptide" evidence="1">
    <location>
        <begin position="1"/>
        <end position="30"/>
    </location>
</feature>
<feature type="chain" id="PRO_0000236809" description="Endo-1,4-beta-xylanase A">
    <location>
        <begin position="31"/>
        <end position="651"/>
    </location>
</feature>
<feature type="domain" description="GH11" evidence="3">
    <location>
        <begin position="33"/>
        <end position="227"/>
    </location>
</feature>
<feature type="domain" description="CBM6 1" evidence="2">
    <location>
        <begin position="250"/>
        <end position="370"/>
    </location>
</feature>
<feature type="repeat" description="1">
    <location>
        <begin position="278"/>
        <end position="339"/>
    </location>
</feature>
<feature type="domain" description="CBM6 2" evidence="2">
    <location>
        <begin position="387"/>
        <end position="507"/>
    </location>
</feature>
<feature type="repeat" description="2">
    <location>
        <begin position="415"/>
        <end position="476"/>
    </location>
</feature>
<feature type="domain" description="CBM6 3" evidence="2">
    <location>
        <begin position="527"/>
        <end position="647"/>
    </location>
</feature>
<feature type="repeat" description="3">
    <location>
        <begin position="555"/>
        <end position="616"/>
    </location>
</feature>
<feature type="region of interest" description="3 X 61 AA approximate repeats">
    <location>
        <begin position="278"/>
        <end position="616"/>
    </location>
</feature>
<feature type="active site" description="Nucleophile" evidence="4">
    <location>
        <position position="124"/>
    </location>
</feature>
<feature type="active site" description="Proton donor" evidence="5">
    <location>
        <position position="214"/>
    </location>
</feature>
<feature type="binding site" evidence="8 15 16 17 18">
    <location>
        <position position="253"/>
    </location>
    <ligand>
        <name>Ca(2+)</name>
        <dbReference type="ChEBI" id="CHEBI:29108"/>
        <label>1</label>
    </ligand>
</feature>
<feature type="binding site" evidence="8 15 16 17 18">
    <location>
        <position position="255"/>
    </location>
    <ligand>
        <name>Ca(2+)</name>
        <dbReference type="ChEBI" id="CHEBI:29108"/>
        <label>1</label>
    </ligand>
</feature>
<feature type="binding site" evidence="8 17">
    <location>
        <position position="270"/>
    </location>
    <ligand>
        <name>D-xylotriose</name>
        <dbReference type="ChEBI" id="CHEBI:62783"/>
        <label>1</label>
    </ligand>
</feature>
<feature type="binding site" evidence="8 15 16 17 18">
    <location>
        <position position="275"/>
    </location>
    <ligand>
        <name>Ca(2+)</name>
        <dbReference type="ChEBI" id="CHEBI:29108"/>
        <label>1</label>
    </ligand>
</feature>
<feature type="binding site" evidence="8 16">
    <location>
        <position position="279"/>
    </location>
    <ligand>
        <name>D-xylobiose</name>
        <dbReference type="ChEBI" id="CHEBI:28309"/>
    </ligand>
</feature>
<feature type="binding site" evidence="8 17">
    <location>
        <position position="279"/>
    </location>
    <ligand>
        <name>D-xylotriose</name>
        <dbReference type="ChEBI" id="CHEBI:62783"/>
        <label>1</label>
    </ligand>
</feature>
<feature type="binding site" evidence="8 16">
    <location>
        <position position="336"/>
    </location>
    <ligand>
        <name>D-xylobiose</name>
        <dbReference type="ChEBI" id="CHEBI:28309"/>
    </ligand>
</feature>
<feature type="binding site" evidence="8 17">
    <location>
        <position position="336"/>
    </location>
    <ligand>
        <name>D-xylotriose</name>
        <dbReference type="ChEBI" id="CHEBI:62783"/>
        <label>1</label>
    </ligand>
</feature>
<feature type="binding site" evidence="8 16">
    <location>
        <position position="363"/>
    </location>
    <ligand>
        <name>D-xylobiose</name>
        <dbReference type="ChEBI" id="CHEBI:28309"/>
    </ligand>
</feature>
<feature type="binding site" evidence="8 16">
    <location>
        <position position="363"/>
    </location>
    <ligand>
        <name>D-xylotriose</name>
        <dbReference type="ChEBI" id="CHEBI:62783"/>
        <label>1</label>
    </ligand>
</feature>
<feature type="binding site" evidence="8 15 16 17 18">
    <location>
        <position position="365"/>
    </location>
    <ligand>
        <name>Ca(2+)</name>
        <dbReference type="ChEBI" id="CHEBI:29108"/>
        <label>1</label>
    </ligand>
</feature>
<feature type="binding site" evidence="7 11 12 13 14">
    <location>
        <position position="530"/>
    </location>
    <ligand>
        <name>Ca(2+)</name>
        <dbReference type="ChEBI" id="CHEBI:29108"/>
        <label>2</label>
    </ligand>
</feature>
<feature type="binding site" evidence="7 11 12 13 14">
    <location>
        <position position="532"/>
    </location>
    <ligand>
        <name>Ca(2+)</name>
        <dbReference type="ChEBI" id="CHEBI:29108"/>
        <label>2</label>
    </ligand>
</feature>
<feature type="binding site" evidence="7 11 12 13 14">
    <location>
        <position position="552"/>
    </location>
    <ligand>
        <name>Ca(2+)</name>
        <dbReference type="ChEBI" id="CHEBI:29108"/>
        <label>2</label>
    </ligand>
</feature>
<feature type="binding site" evidence="7 11">
    <location>
        <position position="556"/>
    </location>
    <ligand>
        <name>D-xylotriose</name>
        <dbReference type="ChEBI" id="CHEBI:62783"/>
        <label>2</label>
    </ligand>
</feature>
<feature type="binding site" evidence="7 11">
    <location>
        <position position="613"/>
    </location>
    <ligand>
        <name>D-xylotriose</name>
        <dbReference type="ChEBI" id="CHEBI:62783"/>
        <label>2</label>
    </ligand>
</feature>
<feature type="binding site" evidence="7 11">
    <location>
        <position position="640"/>
    </location>
    <ligand>
        <name>D-xylotriose</name>
        <dbReference type="ChEBI" id="CHEBI:62783"/>
        <label>2</label>
    </ligand>
</feature>
<feature type="binding site" evidence="7 11 12 13 14">
    <location>
        <position position="642"/>
    </location>
    <ligand>
        <name>Ca(2+)</name>
        <dbReference type="ChEBI" id="CHEBI:29108"/>
        <label>2</label>
    </ligand>
</feature>
<feature type="sequence conflict" description="In Ref. 1; CAD48307." evidence="10" ref="1">
    <original>SGT</original>
    <variation>FRNLRV</variation>
    <location>
        <begin position="649"/>
        <end position="651"/>
    </location>
</feature>
<feature type="strand" evidence="21">
    <location>
        <begin position="258"/>
        <end position="260"/>
    </location>
</feature>
<feature type="strand" evidence="21">
    <location>
        <begin position="266"/>
        <end position="269"/>
    </location>
</feature>
<feature type="strand" evidence="21">
    <location>
        <begin position="275"/>
        <end position="279"/>
    </location>
</feature>
<feature type="strand" evidence="21">
    <location>
        <begin position="285"/>
        <end position="292"/>
    </location>
</feature>
<feature type="strand" evidence="21">
    <location>
        <begin position="297"/>
        <end position="305"/>
    </location>
</feature>
<feature type="strand" evidence="21">
    <location>
        <begin position="310"/>
        <end position="318"/>
    </location>
</feature>
<feature type="strand" evidence="21">
    <location>
        <begin position="323"/>
        <end position="329"/>
    </location>
</feature>
<feature type="strand" evidence="21">
    <location>
        <begin position="339"/>
        <end position="348"/>
    </location>
</feature>
<feature type="strand" evidence="21">
    <location>
        <begin position="350"/>
        <end position="360"/>
    </location>
</feature>
<feature type="strand" evidence="21">
    <location>
        <begin position="363"/>
        <end position="371"/>
    </location>
</feature>
<feature type="strand" evidence="19">
    <location>
        <begin position="523"/>
        <end position="527"/>
    </location>
</feature>
<feature type="strand" evidence="20">
    <location>
        <begin position="535"/>
        <end position="538"/>
    </location>
</feature>
<feature type="strand" evidence="20">
    <location>
        <begin position="543"/>
        <end position="546"/>
    </location>
</feature>
<feature type="strand" evidence="20">
    <location>
        <begin position="550"/>
        <end position="555"/>
    </location>
</feature>
<feature type="strand" evidence="20">
    <location>
        <begin position="562"/>
        <end position="569"/>
    </location>
</feature>
<feature type="strand" evidence="20">
    <location>
        <begin position="574"/>
        <end position="582"/>
    </location>
</feature>
<feature type="strand" evidence="20">
    <location>
        <begin position="587"/>
        <end position="595"/>
    </location>
</feature>
<feature type="strand" evidence="20">
    <location>
        <begin position="600"/>
        <end position="606"/>
    </location>
</feature>
<feature type="strand" evidence="20">
    <location>
        <begin position="616"/>
        <end position="625"/>
    </location>
</feature>
<feature type="strand" evidence="20">
    <location>
        <begin position="627"/>
        <end position="637"/>
    </location>
</feature>
<feature type="strand" evidence="20">
    <location>
        <begin position="640"/>
        <end position="647"/>
    </location>
</feature>
<organism>
    <name type="scientific">Thermoclostridium stercorarium</name>
    <name type="common">Clostridium stercorarium</name>
    <dbReference type="NCBI Taxonomy" id="1510"/>
    <lineage>
        <taxon>Bacteria</taxon>
        <taxon>Bacillati</taxon>
        <taxon>Bacillota</taxon>
        <taxon>Clostridia</taxon>
        <taxon>Eubacteriales</taxon>
        <taxon>Oscillospiraceae</taxon>
        <taxon>Thermoclostridium</taxon>
    </lineage>
</organism>
<keyword id="KW-0002">3D-structure</keyword>
<keyword id="KW-0106">Calcium</keyword>
<keyword id="KW-0119">Carbohydrate metabolism</keyword>
<keyword id="KW-0136">Cellulose degradation</keyword>
<keyword id="KW-0326">Glycosidase</keyword>
<keyword id="KW-0378">Hydrolase</keyword>
<keyword id="KW-0479">Metal-binding</keyword>
<keyword id="KW-0624">Polysaccharide degradation</keyword>
<keyword id="KW-0677">Repeat</keyword>
<keyword id="KW-0964">Secreted</keyword>
<keyword id="KW-0732">Signal</keyword>
<keyword id="KW-0858">Xylan degradation</keyword>